<protein>
    <recommendedName>
        <fullName evidence="1">tRNA-2-methylthio-N(6)-dimethylallyladenosine synthase</fullName>
        <ecNumber evidence="1">2.8.4.3</ecNumber>
    </recommendedName>
    <alternativeName>
        <fullName evidence="1">(Dimethylallyl)adenosine tRNA methylthiotransferase MiaB</fullName>
    </alternativeName>
    <alternativeName>
        <fullName evidence="1">tRNA-i(6)A37 methylthiotransferase</fullName>
    </alternativeName>
</protein>
<name>MIAB_BURM9</name>
<proteinExistence type="inferred from homology"/>
<comment type="function">
    <text evidence="1">Catalyzes the methylthiolation of N6-(dimethylallyl)adenosine (i(6)A), leading to the formation of 2-methylthio-N6-(dimethylallyl)adenosine (ms(2)i(6)A) at position 37 in tRNAs that read codons beginning with uridine.</text>
</comment>
<comment type="catalytic activity">
    <reaction evidence="1">
        <text>N(6)-dimethylallyladenosine(37) in tRNA + (sulfur carrier)-SH + AH2 + 2 S-adenosyl-L-methionine = 2-methylsulfanyl-N(6)-dimethylallyladenosine(37) in tRNA + (sulfur carrier)-H + 5'-deoxyadenosine + L-methionine + A + S-adenosyl-L-homocysteine + 2 H(+)</text>
        <dbReference type="Rhea" id="RHEA:37067"/>
        <dbReference type="Rhea" id="RHEA-COMP:10375"/>
        <dbReference type="Rhea" id="RHEA-COMP:10376"/>
        <dbReference type="Rhea" id="RHEA-COMP:14737"/>
        <dbReference type="Rhea" id="RHEA-COMP:14739"/>
        <dbReference type="ChEBI" id="CHEBI:13193"/>
        <dbReference type="ChEBI" id="CHEBI:15378"/>
        <dbReference type="ChEBI" id="CHEBI:17319"/>
        <dbReference type="ChEBI" id="CHEBI:17499"/>
        <dbReference type="ChEBI" id="CHEBI:29917"/>
        <dbReference type="ChEBI" id="CHEBI:57844"/>
        <dbReference type="ChEBI" id="CHEBI:57856"/>
        <dbReference type="ChEBI" id="CHEBI:59789"/>
        <dbReference type="ChEBI" id="CHEBI:64428"/>
        <dbReference type="ChEBI" id="CHEBI:74415"/>
        <dbReference type="ChEBI" id="CHEBI:74417"/>
        <dbReference type="EC" id="2.8.4.3"/>
    </reaction>
</comment>
<comment type="cofactor">
    <cofactor evidence="1">
        <name>[4Fe-4S] cluster</name>
        <dbReference type="ChEBI" id="CHEBI:49883"/>
    </cofactor>
    <text evidence="1">Binds 2 [4Fe-4S] clusters. One cluster is coordinated with 3 cysteines and an exchangeable S-adenosyl-L-methionine.</text>
</comment>
<comment type="subunit">
    <text evidence="1">Monomer.</text>
</comment>
<comment type="subcellular location">
    <subcellularLocation>
        <location evidence="1">Cytoplasm</location>
    </subcellularLocation>
</comment>
<comment type="similarity">
    <text evidence="1">Belongs to the methylthiotransferase family. MiaB subfamily.</text>
</comment>
<gene>
    <name evidence="1" type="primary">miaB</name>
    <name type="ordered locus">BMA10229_A2358</name>
</gene>
<organism>
    <name type="scientific">Burkholderia mallei (strain NCTC 10229)</name>
    <dbReference type="NCBI Taxonomy" id="412022"/>
    <lineage>
        <taxon>Bacteria</taxon>
        <taxon>Pseudomonadati</taxon>
        <taxon>Pseudomonadota</taxon>
        <taxon>Betaproteobacteria</taxon>
        <taxon>Burkholderiales</taxon>
        <taxon>Burkholderiaceae</taxon>
        <taxon>Burkholderia</taxon>
        <taxon>pseudomallei group</taxon>
    </lineage>
</organism>
<sequence>MTKKVYVKTFGCQMNEYDSDKMVDVLNAAEGLEKTDTPEDADIILFNTCSVREKAQEKVFSDLGRVRELKEAKPDLLIGVGGCVASQEGASIVARAPYVDLVFGPQTLHRLPQMIDARRESGRAQVDITFPEIEKFDHLPPARVEGPSAFVSIMEGCSKYCSYCVVPYTRGDEVSRPLDDVLTEVAGLADQGVREVTLLGQNVNAYRGAIAAGSAEIADFATLIEYVADIPGIERIRYTTSHPKEFTQRLLDVYAKVPKLVDHLHLPVQHGSDRILMAMKRGYTVLEYKSVIRKLRAIRPNLSLSTDIIVGFPGETDADFDKTMALVHEMSYDTSFSFIYSPRPGTPAANLADDTPRELKLKRLQHLQATIEENVARISQSMLGKVERILVEGPSRKDPNELAGRTENNRVVNFPAPSAAHPRLIGQMIDVKINHAYPHSLRGELVLAHGDASAATH</sequence>
<feature type="chain" id="PRO_0000374179" description="tRNA-2-methylthio-N(6)-dimethylallyladenosine synthase">
    <location>
        <begin position="1"/>
        <end position="457"/>
    </location>
</feature>
<feature type="domain" description="MTTase N-terminal" evidence="1">
    <location>
        <begin position="3"/>
        <end position="120"/>
    </location>
</feature>
<feature type="domain" description="Radical SAM core" evidence="2">
    <location>
        <begin position="143"/>
        <end position="377"/>
    </location>
</feature>
<feature type="domain" description="TRAM" evidence="1">
    <location>
        <begin position="380"/>
        <end position="447"/>
    </location>
</feature>
<feature type="binding site" evidence="1">
    <location>
        <position position="12"/>
    </location>
    <ligand>
        <name>[4Fe-4S] cluster</name>
        <dbReference type="ChEBI" id="CHEBI:49883"/>
        <label>1</label>
    </ligand>
</feature>
<feature type="binding site" evidence="1">
    <location>
        <position position="49"/>
    </location>
    <ligand>
        <name>[4Fe-4S] cluster</name>
        <dbReference type="ChEBI" id="CHEBI:49883"/>
        <label>1</label>
    </ligand>
</feature>
<feature type="binding site" evidence="1">
    <location>
        <position position="83"/>
    </location>
    <ligand>
        <name>[4Fe-4S] cluster</name>
        <dbReference type="ChEBI" id="CHEBI:49883"/>
        <label>1</label>
    </ligand>
</feature>
<feature type="binding site" evidence="1">
    <location>
        <position position="157"/>
    </location>
    <ligand>
        <name>[4Fe-4S] cluster</name>
        <dbReference type="ChEBI" id="CHEBI:49883"/>
        <label>2</label>
        <note>4Fe-4S-S-AdoMet</note>
    </ligand>
</feature>
<feature type="binding site" evidence="1">
    <location>
        <position position="161"/>
    </location>
    <ligand>
        <name>[4Fe-4S] cluster</name>
        <dbReference type="ChEBI" id="CHEBI:49883"/>
        <label>2</label>
        <note>4Fe-4S-S-AdoMet</note>
    </ligand>
</feature>
<feature type="binding site" evidence="1">
    <location>
        <position position="164"/>
    </location>
    <ligand>
        <name>[4Fe-4S] cluster</name>
        <dbReference type="ChEBI" id="CHEBI:49883"/>
        <label>2</label>
        <note>4Fe-4S-S-AdoMet</note>
    </ligand>
</feature>
<evidence type="ECO:0000255" key="1">
    <source>
        <dbReference type="HAMAP-Rule" id="MF_01864"/>
    </source>
</evidence>
<evidence type="ECO:0000255" key="2">
    <source>
        <dbReference type="PROSITE-ProRule" id="PRU01266"/>
    </source>
</evidence>
<reference key="1">
    <citation type="journal article" date="2010" name="Genome Biol. Evol.">
        <title>Continuing evolution of Burkholderia mallei through genome reduction and large-scale rearrangements.</title>
        <authorList>
            <person name="Losada L."/>
            <person name="Ronning C.M."/>
            <person name="DeShazer D."/>
            <person name="Woods D."/>
            <person name="Fedorova N."/>
            <person name="Kim H.S."/>
            <person name="Shabalina S.A."/>
            <person name="Pearson T.R."/>
            <person name="Brinkac L."/>
            <person name="Tan P."/>
            <person name="Nandi T."/>
            <person name="Crabtree J."/>
            <person name="Badger J."/>
            <person name="Beckstrom-Sternberg S."/>
            <person name="Saqib M."/>
            <person name="Schutzer S.E."/>
            <person name="Keim P."/>
            <person name="Nierman W.C."/>
        </authorList>
    </citation>
    <scope>NUCLEOTIDE SEQUENCE [LARGE SCALE GENOMIC DNA]</scope>
    <source>
        <strain>NCTC 10229</strain>
    </source>
</reference>
<dbReference type="EC" id="2.8.4.3" evidence="1"/>
<dbReference type="EMBL" id="CP000546">
    <property type="protein sequence ID" value="ABN01158.1"/>
    <property type="molecule type" value="Genomic_DNA"/>
</dbReference>
<dbReference type="RefSeq" id="WP_004190165.1">
    <property type="nucleotide sequence ID" value="NC_008836.1"/>
</dbReference>
<dbReference type="SMR" id="A2S8Q1"/>
<dbReference type="GeneID" id="93059186"/>
<dbReference type="KEGG" id="bml:BMA10229_A2358"/>
<dbReference type="HOGENOM" id="CLU_018697_2_0_4"/>
<dbReference type="Proteomes" id="UP000002283">
    <property type="component" value="Chromosome I"/>
</dbReference>
<dbReference type="GO" id="GO:0005829">
    <property type="term" value="C:cytosol"/>
    <property type="evidence" value="ECO:0007669"/>
    <property type="project" value="TreeGrafter"/>
</dbReference>
<dbReference type="GO" id="GO:0051539">
    <property type="term" value="F:4 iron, 4 sulfur cluster binding"/>
    <property type="evidence" value="ECO:0007669"/>
    <property type="project" value="UniProtKB-UniRule"/>
</dbReference>
<dbReference type="GO" id="GO:0046872">
    <property type="term" value="F:metal ion binding"/>
    <property type="evidence" value="ECO:0007669"/>
    <property type="project" value="UniProtKB-KW"/>
</dbReference>
<dbReference type="GO" id="GO:0035597">
    <property type="term" value="F:N6-isopentenyladenosine methylthiotransferase activity"/>
    <property type="evidence" value="ECO:0007669"/>
    <property type="project" value="TreeGrafter"/>
</dbReference>
<dbReference type="CDD" id="cd01335">
    <property type="entry name" value="Radical_SAM"/>
    <property type="match status" value="1"/>
</dbReference>
<dbReference type="FunFam" id="3.40.50.12160:FF:000001">
    <property type="entry name" value="tRNA-2-methylthio-N(6)-dimethylallyladenosine synthase"/>
    <property type="match status" value="1"/>
</dbReference>
<dbReference type="FunFam" id="3.80.30.20:FF:000001">
    <property type="entry name" value="tRNA-2-methylthio-N(6)-dimethylallyladenosine synthase 2"/>
    <property type="match status" value="1"/>
</dbReference>
<dbReference type="Gene3D" id="3.40.50.12160">
    <property type="entry name" value="Methylthiotransferase, N-terminal domain"/>
    <property type="match status" value="1"/>
</dbReference>
<dbReference type="Gene3D" id="3.80.30.20">
    <property type="entry name" value="tm_1862 like domain"/>
    <property type="match status" value="1"/>
</dbReference>
<dbReference type="HAMAP" id="MF_01864">
    <property type="entry name" value="tRNA_metthiotr_MiaB"/>
    <property type="match status" value="1"/>
</dbReference>
<dbReference type="InterPro" id="IPR006638">
    <property type="entry name" value="Elp3/MiaA/NifB-like_rSAM"/>
</dbReference>
<dbReference type="InterPro" id="IPR005839">
    <property type="entry name" value="Methylthiotransferase"/>
</dbReference>
<dbReference type="InterPro" id="IPR020612">
    <property type="entry name" value="Methylthiotransferase_CS"/>
</dbReference>
<dbReference type="InterPro" id="IPR013848">
    <property type="entry name" value="Methylthiotransferase_N"/>
</dbReference>
<dbReference type="InterPro" id="IPR038135">
    <property type="entry name" value="Methylthiotransferase_N_sf"/>
</dbReference>
<dbReference type="InterPro" id="IPR006463">
    <property type="entry name" value="MiaB_methiolase"/>
</dbReference>
<dbReference type="InterPro" id="IPR007197">
    <property type="entry name" value="rSAM"/>
</dbReference>
<dbReference type="InterPro" id="IPR023404">
    <property type="entry name" value="rSAM_horseshoe"/>
</dbReference>
<dbReference type="InterPro" id="IPR002792">
    <property type="entry name" value="TRAM_dom"/>
</dbReference>
<dbReference type="NCBIfam" id="TIGR01574">
    <property type="entry name" value="miaB-methiolase"/>
    <property type="match status" value="1"/>
</dbReference>
<dbReference type="NCBIfam" id="TIGR00089">
    <property type="entry name" value="MiaB/RimO family radical SAM methylthiotransferase"/>
    <property type="match status" value="1"/>
</dbReference>
<dbReference type="PANTHER" id="PTHR43020">
    <property type="entry name" value="CDK5 REGULATORY SUBUNIT-ASSOCIATED PROTEIN 1"/>
    <property type="match status" value="1"/>
</dbReference>
<dbReference type="PANTHER" id="PTHR43020:SF2">
    <property type="entry name" value="MITOCHONDRIAL TRNA METHYLTHIOTRANSFERASE CDK5RAP1"/>
    <property type="match status" value="1"/>
</dbReference>
<dbReference type="Pfam" id="PF04055">
    <property type="entry name" value="Radical_SAM"/>
    <property type="match status" value="1"/>
</dbReference>
<dbReference type="Pfam" id="PF01938">
    <property type="entry name" value="TRAM"/>
    <property type="match status" value="1"/>
</dbReference>
<dbReference type="Pfam" id="PF00919">
    <property type="entry name" value="UPF0004"/>
    <property type="match status" value="1"/>
</dbReference>
<dbReference type="SFLD" id="SFLDF00273">
    <property type="entry name" value="(dimethylallyl)adenosine_tRNA"/>
    <property type="match status" value="1"/>
</dbReference>
<dbReference type="SFLD" id="SFLDG01082">
    <property type="entry name" value="B12-binding_domain_containing"/>
    <property type="match status" value="1"/>
</dbReference>
<dbReference type="SFLD" id="SFLDS00029">
    <property type="entry name" value="Radical_SAM"/>
    <property type="match status" value="1"/>
</dbReference>
<dbReference type="SMART" id="SM00729">
    <property type="entry name" value="Elp3"/>
    <property type="match status" value="1"/>
</dbReference>
<dbReference type="SUPFAM" id="SSF102114">
    <property type="entry name" value="Radical SAM enzymes"/>
    <property type="match status" value="1"/>
</dbReference>
<dbReference type="PROSITE" id="PS51449">
    <property type="entry name" value="MTTASE_N"/>
    <property type="match status" value="1"/>
</dbReference>
<dbReference type="PROSITE" id="PS01278">
    <property type="entry name" value="MTTASE_RADICAL"/>
    <property type="match status" value="1"/>
</dbReference>
<dbReference type="PROSITE" id="PS51918">
    <property type="entry name" value="RADICAL_SAM"/>
    <property type="match status" value="1"/>
</dbReference>
<dbReference type="PROSITE" id="PS50926">
    <property type="entry name" value="TRAM"/>
    <property type="match status" value="1"/>
</dbReference>
<keyword id="KW-0004">4Fe-4S</keyword>
<keyword id="KW-0963">Cytoplasm</keyword>
<keyword id="KW-0408">Iron</keyword>
<keyword id="KW-0411">Iron-sulfur</keyword>
<keyword id="KW-0479">Metal-binding</keyword>
<keyword id="KW-0949">S-adenosyl-L-methionine</keyword>
<keyword id="KW-0808">Transferase</keyword>
<keyword id="KW-0819">tRNA processing</keyword>
<accession>A2S8Q1</accession>